<sequence>MAASPHTLSSRLLTGCVGGCVWYLERRTIQDSPHKFLHLLRNVNKQWITFQHFNFLKRMYVTQLNRSHNQQVRPKPEPVASPFLEKTSSGQAKAEIYEMRPLSPPSLSLSRKPNEKELIELEPASVIEDSIDVGKERKEEKRWKEMKLQVYDLPGILARLSKIKLTALVVSTTAAGFALAPGPFDWPCFLLTSVGTGLASCAANSINQFFEVPFDSNMNRTKNRPLVRGQISPLLAVSFATCCAVPGVAILTLGVNPLTGALGLFNIFLYTCCYTPLKRISIANTWVGAVVGAIPPVMGWTAATGSLDAGAFLLGGILYSWQFPHFNALSWGLREGYSRGGYCMMSVTHPGLCRRVALRHCLALLVLSAAAPVLDITTWTFPIMALPINAYISYLGFRFYVDADRRSSRRLFFCSLWHLPLLLLLMLTCKRPRGGGDAGPPPS</sequence>
<proteinExistence type="evidence at transcript level"/>
<feature type="transit peptide" description="Mitochondrion" evidence="3">
    <location>
        <begin position="1"/>
        <end status="unknown"/>
    </location>
</feature>
<feature type="chain" id="PRO_0000262867" description="Protoheme IX farnesyltransferase, mitochondrial">
    <location>
        <begin status="unknown"/>
        <end position="443"/>
    </location>
</feature>
<feature type="transmembrane region" description="Helical" evidence="3">
    <location>
        <begin position="174"/>
        <end position="194"/>
    </location>
</feature>
<feature type="transmembrane region" description="Helical" evidence="3">
    <location>
        <begin position="235"/>
        <end position="255"/>
    </location>
</feature>
<feature type="transmembrane region" description="Helical" evidence="3">
    <location>
        <begin position="257"/>
        <end position="277"/>
    </location>
</feature>
<feature type="transmembrane region" description="Helical" evidence="3">
    <location>
        <begin position="280"/>
        <end position="300"/>
    </location>
</feature>
<feature type="transmembrane region" description="Helical" evidence="3">
    <location>
        <begin position="309"/>
        <end position="329"/>
    </location>
</feature>
<feature type="transmembrane region" description="Helical" evidence="3">
    <location>
        <begin position="364"/>
        <end position="384"/>
    </location>
</feature>
<feature type="transmembrane region" description="Helical" evidence="3">
    <location>
        <begin position="411"/>
        <end position="431"/>
    </location>
</feature>
<accession>Q5R460</accession>
<evidence type="ECO:0000250" key="1"/>
<evidence type="ECO:0000250" key="2">
    <source>
        <dbReference type="UniProtKB" id="P24009"/>
    </source>
</evidence>
<evidence type="ECO:0000255" key="3"/>
<evidence type="ECO:0000305" key="4"/>
<protein>
    <recommendedName>
        <fullName>Protoheme IX farnesyltransferase, mitochondrial</fullName>
        <ecNumber evidence="2">2.5.1.141</ecNumber>
    </recommendedName>
    <alternativeName>
        <fullName>Heme O synthase</fullName>
    </alternativeName>
</protein>
<comment type="function">
    <text evidence="1">Converts protoheme IX and farnesyl diphosphate to heme O.</text>
</comment>
<comment type="catalytic activity">
    <reaction evidence="2">
        <text>heme b + (2E,6E)-farnesyl diphosphate + H2O = Fe(II)-heme o + diphosphate</text>
        <dbReference type="Rhea" id="RHEA:28070"/>
        <dbReference type="ChEBI" id="CHEBI:15377"/>
        <dbReference type="ChEBI" id="CHEBI:33019"/>
        <dbReference type="ChEBI" id="CHEBI:60344"/>
        <dbReference type="ChEBI" id="CHEBI:60530"/>
        <dbReference type="ChEBI" id="CHEBI:175763"/>
        <dbReference type="EC" id="2.5.1.141"/>
    </reaction>
</comment>
<comment type="subcellular location">
    <subcellularLocation>
        <location evidence="1">Mitochondrion membrane</location>
        <topology evidence="1">Multi-pass membrane protein</topology>
    </subcellularLocation>
</comment>
<comment type="similarity">
    <text evidence="4">Belongs to the UbiA prenyltransferase family.</text>
</comment>
<gene>
    <name type="primary">COX10</name>
</gene>
<dbReference type="EC" id="2.5.1.141" evidence="2"/>
<dbReference type="EMBL" id="CR861398">
    <property type="protein sequence ID" value="CAH93456.1"/>
    <property type="molecule type" value="mRNA"/>
</dbReference>
<dbReference type="RefSeq" id="NP_001127024.1">
    <property type="nucleotide sequence ID" value="NM_001133552.1"/>
</dbReference>
<dbReference type="SMR" id="Q5R460"/>
<dbReference type="FunCoup" id="Q5R460">
    <property type="interactions" value="1940"/>
</dbReference>
<dbReference type="STRING" id="9601.ENSPPYP00000008995"/>
<dbReference type="GeneID" id="100174049"/>
<dbReference type="KEGG" id="pon:100174049"/>
<dbReference type="CTD" id="1352"/>
<dbReference type="eggNOG" id="KOG1380">
    <property type="taxonomic scope" value="Eukaryota"/>
</dbReference>
<dbReference type="InParanoid" id="Q5R460"/>
<dbReference type="OrthoDB" id="5211at2759"/>
<dbReference type="Proteomes" id="UP000001595">
    <property type="component" value="Unplaced"/>
</dbReference>
<dbReference type="GO" id="GO:0031966">
    <property type="term" value="C:mitochondrial membrane"/>
    <property type="evidence" value="ECO:0007669"/>
    <property type="project" value="UniProtKB-SubCell"/>
</dbReference>
<dbReference type="GO" id="GO:0008495">
    <property type="term" value="F:protoheme IX farnesyltransferase activity"/>
    <property type="evidence" value="ECO:0007669"/>
    <property type="project" value="UniProtKB-EC"/>
</dbReference>
<dbReference type="GO" id="GO:0006784">
    <property type="term" value="P:heme A biosynthetic process"/>
    <property type="evidence" value="ECO:0007669"/>
    <property type="project" value="TreeGrafter"/>
</dbReference>
<dbReference type="GO" id="GO:0006629">
    <property type="term" value="P:lipid metabolic process"/>
    <property type="evidence" value="ECO:0007669"/>
    <property type="project" value="UniProtKB-KW"/>
</dbReference>
<dbReference type="CDD" id="cd13957">
    <property type="entry name" value="PT_UbiA_Cox10"/>
    <property type="match status" value="1"/>
</dbReference>
<dbReference type="FunFam" id="1.10.357.140:FF:000004">
    <property type="entry name" value="Protoheme IX farnesyltransferase, mitochondrial"/>
    <property type="match status" value="1"/>
</dbReference>
<dbReference type="Gene3D" id="1.10.357.140">
    <property type="entry name" value="UbiA prenyltransferase"/>
    <property type="match status" value="1"/>
</dbReference>
<dbReference type="HAMAP" id="MF_00154">
    <property type="entry name" value="CyoE_CtaB"/>
    <property type="match status" value="1"/>
</dbReference>
<dbReference type="InterPro" id="IPR006369">
    <property type="entry name" value="Protohaem_IX_farnesylTrfase"/>
</dbReference>
<dbReference type="InterPro" id="IPR016315">
    <property type="entry name" value="Protohaem_IX_farnesylTrfase_mt"/>
</dbReference>
<dbReference type="InterPro" id="IPR000537">
    <property type="entry name" value="UbiA_prenyltransferase"/>
</dbReference>
<dbReference type="InterPro" id="IPR030470">
    <property type="entry name" value="UbiA_prenylTrfase_CS"/>
</dbReference>
<dbReference type="InterPro" id="IPR044878">
    <property type="entry name" value="UbiA_sf"/>
</dbReference>
<dbReference type="NCBIfam" id="TIGR01473">
    <property type="entry name" value="cyoE_ctaB"/>
    <property type="match status" value="1"/>
</dbReference>
<dbReference type="PANTHER" id="PTHR43448">
    <property type="entry name" value="PROTOHEME IX FARNESYLTRANSFERASE, MITOCHONDRIAL"/>
    <property type="match status" value="1"/>
</dbReference>
<dbReference type="PANTHER" id="PTHR43448:SF2">
    <property type="entry name" value="PROTOHEME IX FARNESYLTRANSFERASE, MITOCHONDRIAL"/>
    <property type="match status" value="1"/>
</dbReference>
<dbReference type="Pfam" id="PF01040">
    <property type="entry name" value="UbiA"/>
    <property type="match status" value="1"/>
</dbReference>
<dbReference type="PIRSF" id="PIRSF001773">
    <property type="entry name" value="COX10"/>
    <property type="match status" value="1"/>
</dbReference>
<dbReference type="PROSITE" id="PS00943">
    <property type="entry name" value="UBIA"/>
    <property type="match status" value="1"/>
</dbReference>
<organism>
    <name type="scientific">Pongo abelii</name>
    <name type="common">Sumatran orangutan</name>
    <name type="synonym">Pongo pygmaeus abelii</name>
    <dbReference type="NCBI Taxonomy" id="9601"/>
    <lineage>
        <taxon>Eukaryota</taxon>
        <taxon>Metazoa</taxon>
        <taxon>Chordata</taxon>
        <taxon>Craniata</taxon>
        <taxon>Vertebrata</taxon>
        <taxon>Euteleostomi</taxon>
        <taxon>Mammalia</taxon>
        <taxon>Eutheria</taxon>
        <taxon>Euarchontoglires</taxon>
        <taxon>Primates</taxon>
        <taxon>Haplorrhini</taxon>
        <taxon>Catarrhini</taxon>
        <taxon>Hominidae</taxon>
        <taxon>Pongo</taxon>
    </lineage>
</organism>
<keyword id="KW-0350">Heme biosynthesis</keyword>
<keyword id="KW-0443">Lipid metabolism</keyword>
<keyword id="KW-0472">Membrane</keyword>
<keyword id="KW-0496">Mitochondrion</keyword>
<keyword id="KW-1185">Reference proteome</keyword>
<keyword id="KW-0808">Transferase</keyword>
<keyword id="KW-0809">Transit peptide</keyword>
<keyword id="KW-0812">Transmembrane</keyword>
<keyword id="KW-1133">Transmembrane helix</keyword>
<name>COX10_PONAB</name>
<reference key="1">
    <citation type="submission" date="2004-11" db="EMBL/GenBank/DDBJ databases">
        <authorList>
            <consortium name="The German cDNA consortium"/>
        </authorList>
    </citation>
    <scope>NUCLEOTIDE SEQUENCE [LARGE SCALE MRNA]</scope>
    <source>
        <tissue>Brain cortex</tissue>
    </source>
</reference>